<feature type="chain" id="PRO_0000266257" description="CTP synthase">
    <location>
        <begin position="1"/>
        <end position="545"/>
    </location>
</feature>
<feature type="domain" description="Glutamine amidotransferase type-1" evidence="1">
    <location>
        <begin position="290"/>
        <end position="534"/>
    </location>
</feature>
<feature type="region of interest" description="Amidoligase domain" evidence="1">
    <location>
        <begin position="1"/>
        <end position="265"/>
    </location>
</feature>
<feature type="active site" description="Nucleophile; for glutamine hydrolysis" evidence="1">
    <location>
        <position position="376"/>
    </location>
</feature>
<feature type="active site" evidence="1">
    <location>
        <position position="507"/>
    </location>
</feature>
<feature type="active site" evidence="1">
    <location>
        <position position="509"/>
    </location>
</feature>
<feature type="binding site" evidence="1">
    <location>
        <position position="15"/>
    </location>
    <ligand>
        <name>CTP</name>
        <dbReference type="ChEBI" id="CHEBI:37563"/>
        <note>allosteric inhibitor</note>
    </ligand>
</feature>
<feature type="binding site" evidence="1">
    <location>
        <position position="15"/>
    </location>
    <ligand>
        <name>UTP</name>
        <dbReference type="ChEBI" id="CHEBI:46398"/>
    </ligand>
</feature>
<feature type="binding site" evidence="1">
    <location>
        <begin position="16"/>
        <end position="21"/>
    </location>
    <ligand>
        <name>ATP</name>
        <dbReference type="ChEBI" id="CHEBI:30616"/>
    </ligand>
</feature>
<feature type="binding site" evidence="1">
    <location>
        <position position="73"/>
    </location>
    <ligand>
        <name>ATP</name>
        <dbReference type="ChEBI" id="CHEBI:30616"/>
    </ligand>
</feature>
<feature type="binding site" evidence="1">
    <location>
        <position position="73"/>
    </location>
    <ligand>
        <name>Mg(2+)</name>
        <dbReference type="ChEBI" id="CHEBI:18420"/>
    </ligand>
</feature>
<feature type="binding site" evidence="1">
    <location>
        <position position="141"/>
    </location>
    <ligand>
        <name>Mg(2+)</name>
        <dbReference type="ChEBI" id="CHEBI:18420"/>
    </ligand>
</feature>
<feature type="binding site" evidence="1">
    <location>
        <begin position="148"/>
        <end position="150"/>
    </location>
    <ligand>
        <name>CTP</name>
        <dbReference type="ChEBI" id="CHEBI:37563"/>
        <note>allosteric inhibitor</note>
    </ligand>
</feature>
<feature type="binding site" evidence="1">
    <location>
        <begin position="188"/>
        <end position="193"/>
    </location>
    <ligand>
        <name>CTP</name>
        <dbReference type="ChEBI" id="CHEBI:37563"/>
        <note>allosteric inhibitor</note>
    </ligand>
</feature>
<feature type="binding site" evidence="1">
    <location>
        <begin position="188"/>
        <end position="193"/>
    </location>
    <ligand>
        <name>UTP</name>
        <dbReference type="ChEBI" id="CHEBI:46398"/>
    </ligand>
</feature>
<feature type="binding site" evidence="1">
    <location>
        <position position="224"/>
    </location>
    <ligand>
        <name>CTP</name>
        <dbReference type="ChEBI" id="CHEBI:37563"/>
        <note>allosteric inhibitor</note>
    </ligand>
</feature>
<feature type="binding site" evidence="1">
    <location>
        <position position="224"/>
    </location>
    <ligand>
        <name>UTP</name>
        <dbReference type="ChEBI" id="CHEBI:46398"/>
    </ligand>
</feature>
<feature type="binding site" evidence="1">
    <location>
        <position position="349"/>
    </location>
    <ligand>
        <name>L-glutamine</name>
        <dbReference type="ChEBI" id="CHEBI:58359"/>
    </ligand>
</feature>
<feature type="binding site" evidence="1">
    <location>
        <begin position="377"/>
        <end position="380"/>
    </location>
    <ligand>
        <name>L-glutamine</name>
        <dbReference type="ChEBI" id="CHEBI:58359"/>
    </ligand>
</feature>
<feature type="binding site" evidence="1">
    <location>
        <position position="400"/>
    </location>
    <ligand>
        <name>L-glutamine</name>
        <dbReference type="ChEBI" id="CHEBI:58359"/>
    </ligand>
</feature>
<feature type="binding site" evidence="1">
    <location>
        <position position="460"/>
    </location>
    <ligand>
        <name>L-glutamine</name>
        <dbReference type="ChEBI" id="CHEBI:58359"/>
    </ligand>
</feature>
<name>PYRG_TROW8</name>
<accession>Q83IC4</accession>
<sequence length="545" mass="60363">MNGIKHIFITGGVVSSIGKGLTAASLGSLLTMRGLKVFIKKLDPYLNVDPGTMNPLQHGEVFITEDGAETDLDVGHYERFLDVDLDRTANVTTGQVYSKVITLERTGRYLGETVQVIPHITDEIKRRIRLAPDDIDVIITEIGGTVGDIESQPFIEAARQIRREVGRENCCFIHVSLVPFLESAGEQKTKPTQHSVAILRAAGIQPDALVLRSDKPISSANQKKIALMCDVSAVVNAVTVPNIYEIPCVLNQHGLDKFVIKHLDLEAGEIDWSYWDDVLDAIENNRSEIEIAIIGKYTGLPDAYISVIEALRAGGFESKTKVNIKWVDSDDENLEDQLENINGACIPGGFGIRGIEGLIKAIRICREREIPTLGICLGMQCMVIEYARHVVGMHGASSTEFTDDTQWPVVTTMLEQRDILIDDQFGGTMRLGSYRAVLSVGSLAASLYGTTDIHERHRHRYEVNNGYAQRLVERGLIVSGRNTEQDLIEFIELDRKDHPFYIGTQAHPECKSRPKRPHPLFKGLVAAALARKEIAEFNSGKTVLQ</sequence>
<dbReference type="EC" id="6.3.4.2" evidence="1"/>
<dbReference type="EMBL" id="BX251410">
    <property type="protein sequence ID" value="CAD66793.1"/>
    <property type="molecule type" value="Genomic_DNA"/>
</dbReference>
<dbReference type="RefSeq" id="WP_011096074.1">
    <property type="nucleotide sequence ID" value="NC_004551.1"/>
</dbReference>
<dbReference type="SMR" id="Q83IC4"/>
<dbReference type="GeneID" id="67387884"/>
<dbReference type="KEGG" id="tws:TW110"/>
<dbReference type="HOGENOM" id="CLU_011675_5_0_11"/>
<dbReference type="UniPathway" id="UPA00159">
    <property type="reaction ID" value="UER00277"/>
</dbReference>
<dbReference type="GO" id="GO:0005829">
    <property type="term" value="C:cytosol"/>
    <property type="evidence" value="ECO:0007669"/>
    <property type="project" value="TreeGrafter"/>
</dbReference>
<dbReference type="GO" id="GO:0005524">
    <property type="term" value="F:ATP binding"/>
    <property type="evidence" value="ECO:0007669"/>
    <property type="project" value="UniProtKB-KW"/>
</dbReference>
<dbReference type="GO" id="GO:0003883">
    <property type="term" value="F:CTP synthase activity"/>
    <property type="evidence" value="ECO:0007669"/>
    <property type="project" value="UniProtKB-UniRule"/>
</dbReference>
<dbReference type="GO" id="GO:0004359">
    <property type="term" value="F:glutaminase activity"/>
    <property type="evidence" value="ECO:0007669"/>
    <property type="project" value="RHEA"/>
</dbReference>
<dbReference type="GO" id="GO:0042802">
    <property type="term" value="F:identical protein binding"/>
    <property type="evidence" value="ECO:0007669"/>
    <property type="project" value="TreeGrafter"/>
</dbReference>
<dbReference type="GO" id="GO:0046872">
    <property type="term" value="F:metal ion binding"/>
    <property type="evidence" value="ECO:0007669"/>
    <property type="project" value="UniProtKB-KW"/>
</dbReference>
<dbReference type="GO" id="GO:0044210">
    <property type="term" value="P:'de novo' CTP biosynthetic process"/>
    <property type="evidence" value="ECO:0007669"/>
    <property type="project" value="UniProtKB-UniRule"/>
</dbReference>
<dbReference type="GO" id="GO:0019856">
    <property type="term" value="P:pyrimidine nucleobase biosynthetic process"/>
    <property type="evidence" value="ECO:0007669"/>
    <property type="project" value="TreeGrafter"/>
</dbReference>
<dbReference type="CDD" id="cd03113">
    <property type="entry name" value="CTPS_N"/>
    <property type="match status" value="1"/>
</dbReference>
<dbReference type="CDD" id="cd01746">
    <property type="entry name" value="GATase1_CTP_Synthase"/>
    <property type="match status" value="1"/>
</dbReference>
<dbReference type="FunFam" id="3.40.50.300:FF:000009">
    <property type="entry name" value="CTP synthase"/>
    <property type="match status" value="1"/>
</dbReference>
<dbReference type="FunFam" id="3.40.50.880:FF:000002">
    <property type="entry name" value="CTP synthase"/>
    <property type="match status" value="1"/>
</dbReference>
<dbReference type="Gene3D" id="3.40.50.880">
    <property type="match status" value="1"/>
</dbReference>
<dbReference type="Gene3D" id="3.40.50.300">
    <property type="entry name" value="P-loop containing nucleotide triphosphate hydrolases"/>
    <property type="match status" value="1"/>
</dbReference>
<dbReference type="HAMAP" id="MF_01227">
    <property type="entry name" value="PyrG"/>
    <property type="match status" value="1"/>
</dbReference>
<dbReference type="InterPro" id="IPR029062">
    <property type="entry name" value="Class_I_gatase-like"/>
</dbReference>
<dbReference type="InterPro" id="IPR004468">
    <property type="entry name" value="CTP_synthase"/>
</dbReference>
<dbReference type="InterPro" id="IPR017456">
    <property type="entry name" value="CTP_synthase_N"/>
</dbReference>
<dbReference type="InterPro" id="IPR017926">
    <property type="entry name" value="GATASE"/>
</dbReference>
<dbReference type="InterPro" id="IPR033828">
    <property type="entry name" value="GATase1_CTP_Synthase"/>
</dbReference>
<dbReference type="InterPro" id="IPR027417">
    <property type="entry name" value="P-loop_NTPase"/>
</dbReference>
<dbReference type="NCBIfam" id="NF003792">
    <property type="entry name" value="PRK05380.1"/>
    <property type="match status" value="1"/>
</dbReference>
<dbReference type="NCBIfam" id="TIGR00337">
    <property type="entry name" value="PyrG"/>
    <property type="match status" value="1"/>
</dbReference>
<dbReference type="PANTHER" id="PTHR11550">
    <property type="entry name" value="CTP SYNTHASE"/>
    <property type="match status" value="1"/>
</dbReference>
<dbReference type="PANTHER" id="PTHR11550:SF0">
    <property type="entry name" value="CTP SYNTHASE-RELATED"/>
    <property type="match status" value="1"/>
</dbReference>
<dbReference type="Pfam" id="PF06418">
    <property type="entry name" value="CTP_synth_N"/>
    <property type="match status" value="1"/>
</dbReference>
<dbReference type="Pfam" id="PF00117">
    <property type="entry name" value="GATase"/>
    <property type="match status" value="1"/>
</dbReference>
<dbReference type="SUPFAM" id="SSF52317">
    <property type="entry name" value="Class I glutamine amidotransferase-like"/>
    <property type="match status" value="1"/>
</dbReference>
<dbReference type="SUPFAM" id="SSF52540">
    <property type="entry name" value="P-loop containing nucleoside triphosphate hydrolases"/>
    <property type="match status" value="1"/>
</dbReference>
<dbReference type="PROSITE" id="PS51273">
    <property type="entry name" value="GATASE_TYPE_1"/>
    <property type="match status" value="1"/>
</dbReference>
<evidence type="ECO:0000255" key="1">
    <source>
        <dbReference type="HAMAP-Rule" id="MF_01227"/>
    </source>
</evidence>
<keyword id="KW-0067">ATP-binding</keyword>
<keyword id="KW-0315">Glutamine amidotransferase</keyword>
<keyword id="KW-0436">Ligase</keyword>
<keyword id="KW-0460">Magnesium</keyword>
<keyword id="KW-0479">Metal-binding</keyword>
<keyword id="KW-0547">Nucleotide-binding</keyword>
<keyword id="KW-0665">Pyrimidine biosynthesis</keyword>
<reference key="1">
    <citation type="journal article" date="2003" name="Lancet">
        <title>Sequencing and analysis of the genome of the Whipple's disease bacterium Tropheryma whipplei.</title>
        <authorList>
            <person name="Bentley S.D."/>
            <person name="Maiwald M."/>
            <person name="Murphy L.D."/>
            <person name="Pallen M.J."/>
            <person name="Yeats C.A."/>
            <person name="Dover L.G."/>
            <person name="Norbertczak H.T."/>
            <person name="Besra G.S."/>
            <person name="Quail M.A."/>
            <person name="Harris D.E."/>
            <person name="von Herbay A."/>
            <person name="Goble A."/>
            <person name="Rutter S."/>
            <person name="Squares R."/>
            <person name="Squares S."/>
            <person name="Barrell B.G."/>
            <person name="Parkhill J."/>
            <person name="Relman D.A."/>
        </authorList>
    </citation>
    <scope>NUCLEOTIDE SEQUENCE [LARGE SCALE GENOMIC DNA]</scope>
    <source>
        <strain>TW08/27</strain>
    </source>
</reference>
<comment type="function">
    <text evidence="1">Catalyzes the ATP-dependent amination of UTP to CTP with either L-glutamine or ammonia as the source of nitrogen. Regulates intracellular CTP levels through interactions with the four ribonucleotide triphosphates.</text>
</comment>
<comment type="catalytic activity">
    <reaction evidence="1">
        <text>UTP + L-glutamine + ATP + H2O = CTP + L-glutamate + ADP + phosphate + 2 H(+)</text>
        <dbReference type="Rhea" id="RHEA:26426"/>
        <dbReference type="ChEBI" id="CHEBI:15377"/>
        <dbReference type="ChEBI" id="CHEBI:15378"/>
        <dbReference type="ChEBI" id="CHEBI:29985"/>
        <dbReference type="ChEBI" id="CHEBI:30616"/>
        <dbReference type="ChEBI" id="CHEBI:37563"/>
        <dbReference type="ChEBI" id="CHEBI:43474"/>
        <dbReference type="ChEBI" id="CHEBI:46398"/>
        <dbReference type="ChEBI" id="CHEBI:58359"/>
        <dbReference type="ChEBI" id="CHEBI:456216"/>
        <dbReference type="EC" id="6.3.4.2"/>
    </reaction>
</comment>
<comment type="catalytic activity">
    <reaction evidence="1">
        <text>L-glutamine + H2O = L-glutamate + NH4(+)</text>
        <dbReference type="Rhea" id="RHEA:15889"/>
        <dbReference type="ChEBI" id="CHEBI:15377"/>
        <dbReference type="ChEBI" id="CHEBI:28938"/>
        <dbReference type="ChEBI" id="CHEBI:29985"/>
        <dbReference type="ChEBI" id="CHEBI:58359"/>
    </reaction>
</comment>
<comment type="catalytic activity">
    <reaction evidence="1">
        <text>UTP + NH4(+) + ATP = CTP + ADP + phosphate + 2 H(+)</text>
        <dbReference type="Rhea" id="RHEA:16597"/>
        <dbReference type="ChEBI" id="CHEBI:15378"/>
        <dbReference type="ChEBI" id="CHEBI:28938"/>
        <dbReference type="ChEBI" id="CHEBI:30616"/>
        <dbReference type="ChEBI" id="CHEBI:37563"/>
        <dbReference type="ChEBI" id="CHEBI:43474"/>
        <dbReference type="ChEBI" id="CHEBI:46398"/>
        <dbReference type="ChEBI" id="CHEBI:456216"/>
    </reaction>
</comment>
<comment type="activity regulation">
    <text evidence="1">Allosterically activated by GTP, when glutamine is the substrate; GTP has no effect on the reaction when ammonia is the substrate. The allosteric effector GTP functions by stabilizing the protein conformation that binds the tetrahedral intermediate(s) formed during glutamine hydrolysis. Inhibited by the product CTP, via allosteric rather than competitive inhibition.</text>
</comment>
<comment type="pathway">
    <text evidence="1">Pyrimidine metabolism; CTP biosynthesis via de novo pathway; CTP from UDP: step 2/2.</text>
</comment>
<comment type="subunit">
    <text evidence="1">Homotetramer.</text>
</comment>
<comment type="miscellaneous">
    <text evidence="1">CTPSs have evolved a hybrid strategy for distinguishing between UTP and CTP. The overlapping regions of the product feedback inhibitory and substrate sites recognize a common feature in both compounds, the triphosphate moiety. To differentiate isosteric substrate and product pyrimidine rings, an additional pocket far from the expected kinase/ligase catalytic site, specifically recognizes the cytosine and ribose portions of the product inhibitor.</text>
</comment>
<comment type="similarity">
    <text evidence="1">Belongs to the CTP synthase family.</text>
</comment>
<gene>
    <name evidence="1" type="primary">pyrG</name>
    <name type="ordered locus">TW110</name>
</gene>
<proteinExistence type="inferred from homology"/>
<protein>
    <recommendedName>
        <fullName evidence="1">CTP synthase</fullName>
        <ecNumber evidence="1">6.3.4.2</ecNumber>
    </recommendedName>
    <alternativeName>
        <fullName evidence="1">Cytidine 5'-triphosphate synthase</fullName>
    </alternativeName>
    <alternativeName>
        <fullName evidence="1">Cytidine triphosphate synthetase</fullName>
        <shortName evidence="1">CTP synthetase</shortName>
        <shortName evidence="1">CTPS</shortName>
    </alternativeName>
    <alternativeName>
        <fullName evidence="1">UTP--ammonia ligase</fullName>
    </alternativeName>
</protein>
<organism>
    <name type="scientific">Tropheryma whipplei (strain TW08/27)</name>
    <name type="common">Whipple's bacillus</name>
    <dbReference type="NCBI Taxonomy" id="218496"/>
    <lineage>
        <taxon>Bacteria</taxon>
        <taxon>Bacillati</taxon>
        <taxon>Actinomycetota</taxon>
        <taxon>Actinomycetes</taxon>
        <taxon>Micrococcales</taxon>
        <taxon>Tropherymataceae</taxon>
        <taxon>Tropheryma</taxon>
    </lineage>
</organism>